<proteinExistence type="inferred from homology"/>
<gene>
    <name evidence="2" type="primary">infB</name>
    <name type="ordered locus">Synpcc7942_2020</name>
</gene>
<dbReference type="EMBL" id="CP000100">
    <property type="protein sequence ID" value="ABB58050.1"/>
    <property type="molecule type" value="Genomic_DNA"/>
</dbReference>
<dbReference type="RefSeq" id="WP_011378279.1">
    <property type="nucleotide sequence ID" value="NZ_JACJTX010000001.1"/>
</dbReference>
<dbReference type="SMR" id="Q31LL9"/>
<dbReference type="STRING" id="1140.Synpcc7942_2020"/>
<dbReference type="PaxDb" id="1140-Synpcc7942_2020"/>
<dbReference type="GeneID" id="72430895"/>
<dbReference type="KEGG" id="syf:Synpcc7942_2020"/>
<dbReference type="eggNOG" id="COG0532">
    <property type="taxonomic scope" value="Bacteria"/>
</dbReference>
<dbReference type="HOGENOM" id="CLU_006301_7_0_3"/>
<dbReference type="OrthoDB" id="9811804at2"/>
<dbReference type="BioCyc" id="SYNEL:SYNPCC7942_2020-MONOMER"/>
<dbReference type="Proteomes" id="UP000889800">
    <property type="component" value="Chromosome"/>
</dbReference>
<dbReference type="GO" id="GO:0005829">
    <property type="term" value="C:cytosol"/>
    <property type="evidence" value="ECO:0007669"/>
    <property type="project" value="TreeGrafter"/>
</dbReference>
<dbReference type="GO" id="GO:0005525">
    <property type="term" value="F:GTP binding"/>
    <property type="evidence" value="ECO:0007669"/>
    <property type="project" value="UniProtKB-KW"/>
</dbReference>
<dbReference type="GO" id="GO:0003924">
    <property type="term" value="F:GTPase activity"/>
    <property type="evidence" value="ECO:0007669"/>
    <property type="project" value="UniProtKB-UniRule"/>
</dbReference>
<dbReference type="GO" id="GO:0003743">
    <property type="term" value="F:translation initiation factor activity"/>
    <property type="evidence" value="ECO:0007669"/>
    <property type="project" value="UniProtKB-UniRule"/>
</dbReference>
<dbReference type="CDD" id="cd01887">
    <property type="entry name" value="IF2_eIF5B"/>
    <property type="match status" value="1"/>
</dbReference>
<dbReference type="CDD" id="cd03702">
    <property type="entry name" value="IF2_mtIF2_II"/>
    <property type="match status" value="1"/>
</dbReference>
<dbReference type="CDD" id="cd03692">
    <property type="entry name" value="mtIF2_IVc"/>
    <property type="match status" value="1"/>
</dbReference>
<dbReference type="FunFam" id="2.40.30.10:FF:000007">
    <property type="entry name" value="Translation initiation factor IF-2"/>
    <property type="match status" value="1"/>
</dbReference>
<dbReference type="FunFam" id="2.40.30.10:FF:000008">
    <property type="entry name" value="Translation initiation factor IF-2"/>
    <property type="match status" value="1"/>
</dbReference>
<dbReference type="FunFam" id="3.40.50.10050:FF:000001">
    <property type="entry name" value="Translation initiation factor IF-2"/>
    <property type="match status" value="1"/>
</dbReference>
<dbReference type="FunFam" id="3.40.50.300:FF:000019">
    <property type="entry name" value="Translation initiation factor IF-2"/>
    <property type="match status" value="1"/>
</dbReference>
<dbReference type="Gene3D" id="1.10.10.2480">
    <property type="match status" value="1"/>
</dbReference>
<dbReference type="Gene3D" id="3.40.50.300">
    <property type="entry name" value="P-loop containing nucleotide triphosphate hydrolases"/>
    <property type="match status" value="1"/>
</dbReference>
<dbReference type="Gene3D" id="2.40.30.10">
    <property type="entry name" value="Translation factors"/>
    <property type="match status" value="2"/>
</dbReference>
<dbReference type="Gene3D" id="3.40.50.10050">
    <property type="entry name" value="Translation initiation factor IF- 2, domain 3"/>
    <property type="match status" value="1"/>
</dbReference>
<dbReference type="HAMAP" id="MF_00100_B">
    <property type="entry name" value="IF_2_B"/>
    <property type="match status" value="1"/>
</dbReference>
<dbReference type="InterPro" id="IPR053905">
    <property type="entry name" value="EF-G-like_DII"/>
</dbReference>
<dbReference type="InterPro" id="IPR044145">
    <property type="entry name" value="IF2_II"/>
</dbReference>
<dbReference type="InterPro" id="IPR006847">
    <property type="entry name" value="IF2_N"/>
</dbReference>
<dbReference type="InterPro" id="IPR027417">
    <property type="entry name" value="P-loop_NTPase"/>
</dbReference>
<dbReference type="InterPro" id="IPR005225">
    <property type="entry name" value="Small_GTP-bd"/>
</dbReference>
<dbReference type="InterPro" id="IPR000795">
    <property type="entry name" value="T_Tr_GTP-bd_dom"/>
</dbReference>
<dbReference type="InterPro" id="IPR000178">
    <property type="entry name" value="TF_IF2_bacterial-like"/>
</dbReference>
<dbReference type="InterPro" id="IPR015760">
    <property type="entry name" value="TIF_IF2"/>
</dbReference>
<dbReference type="InterPro" id="IPR023115">
    <property type="entry name" value="TIF_IF2_dom3"/>
</dbReference>
<dbReference type="InterPro" id="IPR036925">
    <property type="entry name" value="TIF_IF2_dom3_sf"/>
</dbReference>
<dbReference type="InterPro" id="IPR009000">
    <property type="entry name" value="Transl_B-barrel_sf"/>
</dbReference>
<dbReference type="NCBIfam" id="TIGR00487">
    <property type="entry name" value="IF-2"/>
    <property type="match status" value="1"/>
</dbReference>
<dbReference type="NCBIfam" id="TIGR00231">
    <property type="entry name" value="small_GTP"/>
    <property type="match status" value="1"/>
</dbReference>
<dbReference type="PANTHER" id="PTHR43381:SF5">
    <property type="entry name" value="TR-TYPE G DOMAIN-CONTAINING PROTEIN"/>
    <property type="match status" value="1"/>
</dbReference>
<dbReference type="PANTHER" id="PTHR43381">
    <property type="entry name" value="TRANSLATION INITIATION FACTOR IF-2-RELATED"/>
    <property type="match status" value="1"/>
</dbReference>
<dbReference type="Pfam" id="PF22042">
    <property type="entry name" value="EF-G_D2"/>
    <property type="match status" value="1"/>
</dbReference>
<dbReference type="Pfam" id="PF00009">
    <property type="entry name" value="GTP_EFTU"/>
    <property type="match status" value="1"/>
</dbReference>
<dbReference type="Pfam" id="PF11987">
    <property type="entry name" value="IF-2"/>
    <property type="match status" value="1"/>
</dbReference>
<dbReference type="Pfam" id="PF04760">
    <property type="entry name" value="IF2_N"/>
    <property type="match status" value="2"/>
</dbReference>
<dbReference type="PRINTS" id="PR00315">
    <property type="entry name" value="ELONGATNFCT"/>
</dbReference>
<dbReference type="SUPFAM" id="SSF52156">
    <property type="entry name" value="Initiation factor IF2/eIF5b, domain 3"/>
    <property type="match status" value="1"/>
</dbReference>
<dbReference type="SUPFAM" id="SSF52540">
    <property type="entry name" value="P-loop containing nucleoside triphosphate hydrolases"/>
    <property type="match status" value="1"/>
</dbReference>
<dbReference type="SUPFAM" id="SSF50447">
    <property type="entry name" value="Translation proteins"/>
    <property type="match status" value="2"/>
</dbReference>
<dbReference type="PROSITE" id="PS51722">
    <property type="entry name" value="G_TR_2"/>
    <property type="match status" value="1"/>
</dbReference>
<dbReference type="PROSITE" id="PS01176">
    <property type="entry name" value="IF2"/>
    <property type="match status" value="1"/>
</dbReference>
<accession>Q31LL9</accession>
<feature type="chain" id="PRO_1000008360" description="Translation initiation factor IF-2">
    <location>
        <begin position="1"/>
        <end position="1030"/>
    </location>
</feature>
<feature type="domain" description="tr-type G">
    <location>
        <begin position="522"/>
        <end position="695"/>
    </location>
</feature>
<feature type="region of interest" description="Disordered" evidence="3">
    <location>
        <begin position="56"/>
        <end position="361"/>
    </location>
</feature>
<feature type="region of interest" description="Disordered" evidence="3">
    <location>
        <begin position="394"/>
        <end position="434"/>
    </location>
</feature>
<feature type="region of interest" description="G1" evidence="1">
    <location>
        <begin position="531"/>
        <end position="538"/>
    </location>
</feature>
<feature type="region of interest" description="G2" evidence="1">
    <location>
        <begin position="556"/>
        <end position="560"/>
    </location>
</feature>
<feature type="region of interest" description="G3" evidence="1">
    <location>
        <begin position="581"/>
        <end position="584"/>
    </location>
</feature>
<feature type="region of interest" description="G4" evidence="1">
    <location>
        <begin position="635"/>
        <end position="638"/>
    </location>
</feature>
<feature type="region of interest" description="G5" evidence="1">
    <location>
        <begin position="671"/>
        <end position="673"/>
    </location>
</feature>
<feature type="compositionally biased region" description="Low complexity" evidence="3">
    <location>
        <begin position="56"/>
        <end position="69"/>
    </location>
</feature>
<feature type="compositionally biased region" description="Low complexity" evidence="3">
    <location>
        <begin position="111"/>
        <end position="132"/>
    </location>
</feature>
<feature type="compositionally biased region" description="Basic and acidic residues" evidence="3">
    <location>
        <begin position="134"/>
        <end position="144"/>
    </location>
</feature>
<feature type="compositionally biased region" description="Low complexity" evidence="3">
    <location>
        <begin position="154"/>
        <end position="164"/>
    </location>
</feature>
<feature type="compositionally biased region" description="Basic and acidic residues" evidence="3">
    <location>
        <begin position="188"/>
        <end position="206"/>
    </location>
</feature>
<feature type="compositionally biased region" description="Low complexity" evidence="3">
    <location>
        <begin position="259"/>
        <end position="273"/>
    </location>
</feature>
<feature type="binding site" evidence="2">
    <location>
        <begin position="531"/>
        <end position="538"/>
    </location>
    <ligand>
        <name>GTP</name>
        <dbReference type="ChEBI" id="CHEBI:37565"/>
    </ligand>
</feature>
<feature type="binding site" evidence="2">
    <location>
        <begin position="581"/>
        <end position="585"/>
    </location>
    <ligand>
        <name>GTP</name>
        <dbReference type="ChEBI" id="CHEBI:37565"/>
    </ligand>
</feature>
<feature type="binding site" evidence="2">
    <location>
        <begin position="635"/>
        <end position="638"/>
    </location>
    <ligand>
        <name>GTP</name>
        <dbReference type="ChEBI" id="CHEBI:37565"/>
    </ligand>
</feature>
<comment type="function">
    <text evidence="2">One of the essential components for the initiation of protein synthesis. Protects formylmethionyl-tRNA from spontaneous hydrolysis and promotes its binding to the 30S ribosomal subunits. Also involved in the hydrolysis of GTP during the formation of the 70S ribosomal complex.</text>
</comment>
<comment type="subcellular location">
    <subcellularLocation>
        <location evidence="2">Cytoplasm</location>
    </subcellularLocation>
</comment>
<comment type="similarity">
    <text evidence="2">Belongs to the TRAFAC class translation factor GTPase superfamily. Classic translation factor GTPase family. IF-2 subfamily.</text>
</comment>
<keyword id="KW-0963">Cytoplasm</keyword>
<keyword id="KW-0342">GTP-binding</keyword>
<keyword id="KW-0396">Initiation factor</keyword>
<keyword id="KW-0547">Nucleotide-binding</keyword>
<keyword id="KW-0648">Protein biosynthesis</keyword>
<keyword id="KW-1185">Reference proteome</keyword>
<sequence length="1030" mass="110641">MNNGKVRIYELSKELNLDNKDVLAVCDRLEIPYKSYSSTLSEEQVVQVRQVLAGAAPSEPVAAASAADSPKAERKQEIVSVRRPTPQAAGGAKPEIVGRPTASEKPQAERPNIVAPPRRPAAANEPAKAPIKPARPEKSAEKPEIVTPRPPAPAASAEPAKSPSRPAPAATPRPVAETKKPKPAAAELLRKPEIVRRSEAKPERTSEAPTPRPKIERRPEQTGPARPQLGQPVAGNGVSKPAKPVKPIELVAPPSRPKVAASASGVPAAASRVLPNKPQKPTAPGGPELKQRPKPAAPASGEDLAATVDVFQPVPPLELRRPTAPARPARPRKGWEEEEDERAAANRKAGNKAAAKAKRRQLIQDDDDDDLLTAEQELAAADALNLAMSLARPSKPKVPQAKPAVAVMPTKGRKPRRESARERQHRRRMEREQKPVRPELISLRSSMTVQELAQLMVVPETDIIKSLFFKGIAATVTQSLDVATIEQVAEEFGILVEQETEESGARKTTQMVEDADAESLQTRPPVVTVMGHVDHGKTTLLDAIRKTRVAAGEAGGITQHIGAYHVDVEHNGDQHQIVFLDTPGHEAFTAMRARGARVTDIAILVVAADDGVRPQTLEAISHAKAAEVPLIVAINKCDKEEAQPDRVKQELTEYGLVPEEWGGETVMVPVSAIKGENIDQLLEMILLVTEVEELVANPDRAARGTVIEAHLDKARGPVATLLVQNGTLRVGDVLVAGSVLGKVRAMVDDRGDRVEAATPSFAVEVLGLGDVPAAGDEFEVYSDEKSARAVATSRADEQRQSRLQQAMASRRVSLGTVSAQAQEGELKELNLILKADVQGSVEAILGSLEQLPQKQVQVRVLLAAPGEITETDVDLAAASGAVIVGFNTTLASGAKRAADEAGVDVRDYDIIYKLLEDIQAAMEGLLEPELVEEPLGQVEVRAVFSIGRGAVAGCYVQSGKAIRNCNIRVRRGSNLVYTGTLDSLKRMKEDVKEVNSGYECGIGLDSFSAWQEGDIIETYRMVTKRRTLEV</sequence>
<protein>
    <recommendedName>
        <fullName evidence="2">Translation initiation factor IF-2</fullName>
    </recommendedName>
</protein>
<organism>
    <name type="scientific">Synechococcus elongatus (strain ATCC 33912 / PCC 7942 / FACHB-805)</name>
    <name type="common">Anacystis nidulans R2</name>
    <dbReference type="NCBI Taxonomy" id="1140"/>
    <lineage>
        <taxon>Bacteria</taxon>
        <taxon>Bacillati</taxon>
        <taxon>Cyanobacteriota</taxon>
        <taxon>Cyanophyceae</taxon>
        <taxon>Synechococcales</taxon>
        <taxon>Synechococcaceae</taxon>
        <taxon>Synechococcus</taxon>
    </lineage>
</organism>
<reference key="1">
    <citation type="submission" date="2005-08" db="EMBL/GenBank/DDBJ databases">
        <title>Complete sequence of chromosome 1 of Synechococcus elongatus PCC 7942.</title>
        <authorList>
            <consortium name="US DOE Joint Genome Institute"/>
            <person name="Copeland A."/>
            <person name="Lucas S."/>
            <person name="Lapidus A."/>
            <person name="Barry K."/>
            <person name="Detter J.C."/>
            <person name="Glavina T."/>
            <person name="Hammon N."/>
            <person name="Israni S."/>
            <person name="Pitluck S."/>
            <person name="Schmutz J."/>
            <person name="Larimer F."/>
            <person name="Land M."/>
            <person name="Kyrpides N."/>
            <person name="Lykidis A."/>
            <person name="Golden S."/>
            <person name="Richardson P."/>
        </authorList>
    </citation>
    <scope>NUCLEOTIDE SEQUENCE [LARGE SCALE GENOMIC DNA]</scope>
    <source>
        <strain>ATCC 33912 / PCC 7942 / FACHB-805</strain>
    </source>
</reference>
<evidence type="ECO:0000250" key="1"/>
<evidence type="ECO:0000255" key="2">
    <source>
        <dbReference type="HAMAP-Rule" id="MF_00100"/>
    </source>
</evidence>
<evidence type="ECO:0000256" key="3">
    <source>
        <dbReference type="SAM" id="MobiDB-lite"/>
    </source>
</evidence>
<name>IF2_SYNE7</name>